<evidence type="ECO:0000255" key="1">
    <source>
        <dbReference type="HAMAP-Rule" id="MF_00274"/>
    </source>
</evidence>
<evidence type="ECO:0000256" key="2">
    <source>
        <dbReference type="SAM" id="MobiDB-lite"/>
    </source>
</evidence>
<reference key="1">
    <citation type="journal article" date="2009" name="J. Bacteriol.">
        <title>Complete genome sequence of Macrococcus caseolyticus strain JCSCS5402, reflecting the ancestral genome of the human-pathogenic staphylococci.</title>
        <authorList>
            <person name="Baba T."/>
            <person name="Kuwahara-Arai K."/>
            <person name="Uchiyama I."/>
            <person name="Takeuchi F."/>
            <person name="Ito T."/>
            <person name="Hiramatsu K."/>
        </authorList>
    </citation>
    <scope>NUCLEOTIDE SEQUENCE [LARGE SCALE GENOMIC DNA]</scope>
    <source>
        <strain>JCSC5402</strain>
    </source>
</reference>
<proteinExistence type="inferred from homology"/>
<name>Y1934_MACCJ</name>
<dbReference type="EMBL" id="AP009484">
    <property type="protein sequence ID" value="BAH18641.1"/>
    <property type="molecule type" value="Genomic_DNA"/>
</dbReference>
<dbReference type="RefSeq" id="WP_015912433.1">
    <property type="nucleotide sequence ID" value="NC_011999.1"/>
</dbReference>
<dbReference type="SMR" id="B9E8X3"/>
<dbReference type="STRING" id="458233.MCCL_1934"/>
<dbReference type="GeneID" id="61130337"/>
<dbReference type="KEGG" id="mcl:MCCL_1934"/>
<dbReference type="eggNOG" id="COG0718">
    <property type="taxonomic scope" value="Bacteria"/>
</dbReference>
<dbReference type="HOGENOM" id="CLU_140930_1_0_9"/>
<dbReference type="OrthoDB" id="9795263at2"/>
<dbReference type="Proteomes" id="UP000001383">
    <property type="component" value="Chromosome"/>
</dbReference>
<dbReference type="GO" id="GO:0043590">
    <property type="term" value="C:bacterial nucleoid"/>
    <property type="evidence" value="ECO:0007669"/>
    <property type="project" value="UniProtKB-UniRule"/>
</dbReference>
<dbReference type="GO" id="GO:0005829">
    <property type="term" value="C:cytosol"/>
    <property type="evidence" value="ECO:0007669"/>
    <property type="project" value="TreeGrafter"/>
</dbReference>
<dbReference type="GO" id="GO:0003677">
    <property type="term" value="F:DNA binding"/>
    <property type="evidence" value="ECO:0007669"/>
    <property type="project" value="UniProtKB-UniRule"/>
</dbReference>
<dbReference type="FunFam" id="3.30.1310.10:FF:000002">
    <property type="entry name" value="Nucleoid-associated protein IKC_06587"/>
    <property type="match status" value="1"/>
</dbReference>
<dbReference type="Gene3D" id="3.30.1310.10">
    <property type="entry name" value="Nucleoid-associated protein YbaB-like domain"/>
    <property type="match status" value="1"/>
</dbReference>
<dbReference type="HAMAP" id="MF_00274">
    <property type="entry name" value="DNA_YbaB_EbfC"/>
    <property type="match status" value="1"/>
</dbReference>
<dbReference type="InterPro" id="IPR036894">
    <property type="entry name" value="YbaB-like_sf"/>
</dbReference>
<dbReference type="InterPro" id="IPR004401">
    <property type="entry name" value="YbaB/EbfC"/>
</dbReference>
<dbReference type="NCBIfam" id="TIGR00103">
    <property type="entry name" value="DNA_YbaB_EbfC"/>
    <property type="match status" value="1"/>
</dbReference>
<dbReference type="PANTHER" id="PTHR33449">
    <property type="entry name" value="NUCLEOID-ASSOCIATED PROTEIN YBAB"/>
    <property type="match status" value="1"/>
</dbReference>
<dbReference type="PANTHER" id="PTHR33449:SF1">
    <property type="entry name" value="NUCLEOID-ASSOCIATED PROTEIN YBAB"/>
    <property type="match status" value="1"/>
</dbReference>
<dbReference type="Pfam" id="PF02575">
    <property type="entry name" value="YbaB_DNA_bd"/>
    <property type="match status" value="1"/>
</dbReference>
<dbReference type="PIRSF" id="PIRSF004555">
    <property type="entry name" value="UCP004555"/>
    <property type="match status" value="1"/>
</dbReference>
<dbReference type="SUPFAM" id="SSF82607">
    <property type="entry name" value="YbaB-like"/>
    <property type="match status" value="1"/>
</dbReference>
<comment type="function">
    <text evidence="1">Binds to DNA and alters its conformation. May be involved in regulation of gene expression, nucleoid organization and DNA protection.</text>
</comment>
<comment type="subunit">
    <text evidence="1">Homodimer.</text>
</comment>
<comment type="subcellular location">
    <subcellularLocation>
        <location evidence="1">Cytoplasm</location>
        <location evidence="1">Nucleoid</location>
    </subcellularLocation>
</comment>
<comment type="similarity">
    <text evidence="1">Belongs to the YbaB/EbfC family.</text>
</comment>
<keyword id="KW-0963">Cytoplasm</keyword>
<keyword id="KW-0238">DNA-binding</keyword>
<keyword id="KW-1185">Reference proteome</keyword>
<gene>
    <name type="ordered locus">MCCL_1934</name>
</gene>
<protein>
    <recommendedName>
        <fullName evidence="1">Nucleoid-associated protein MCCL_1934</fullName>
    </recommendedName>
</protein>
<accession>B9E8X3</accession>
<organism>
    <name type="scientific">Macrococcus caseolyticus (strain JCSC5402)</name>
    <name type="common">Macrococcoides caseolyticum</name>
    <dbReference type="NCBI Taxonomy" id="458233"/>
    <lineage>
        <taxon>Bacteria</taxon>
        <taxon>Bacillati</taxon>
        <taxon>Bacillota</taxon>
        <taxon>Bacilli</taxon>
        <taxon>Bacillales</taxon>
        <taxon>Staphylococcaceae</taxon>
        <taxon>Macrococcoides</taxon>
    </lineage>
</organism>
<feature type="chain" id="PRO_1000197665" description="Nucleoid-associated protein MCCL_1934">
    <location>
        <begin position="1"/>
        <end position="106"/>
    </location>
</feature>
<feature type="region of interest" description="Disordered" evidence="2">
    <location>
        <begin position="1"/>
        <end position="34"/>
    </location>
</feature>
<feature type="compositionally biased region" description="Low complexity" evidence="2">
    <location>
        <begin position="7"/>
        <end position="16"/>
    </location>
</feature>
<feature type="compositionally biased region" description="Basic and acidic residues" evidence="2">
    <location>
        <begin position="20"/>
        <end position="34"/>
    </location>
</feature>
<sequence>MRGGGNMQQMMKQMQKMQKKMAEEQEKLKEERIEGTAGGGMVTVVVSGHKEVLDVIIKEEVVDPEDIEMLQDLVLAATNDALTKADDVTAQRLGQHTKGLNIPGMM</sequence>